<accession>P14087</accession>
<feature type="chain" id="PRO_0000067458" description="Annexin A1">
    <location>
        <begin position="1"/>
        <end position="346"/>
    </location>
</feature>
<feature type="peptide" id="PRO_0000454554" description="Annexin Ac2-26" evidence="2">
    <location>
        <begin position="2"/>
        <end position="26"/>
    </location>
</feature>
<feature type="repeat" description="Annexin 1" evidence="7">
    <location>
        <begin position="42"/>
        <end position="113"/>
    </location>
</feature>
<feature type="repeat" description="Annexin 2" evidence="7">
    <location>
        <begin position="114"/>
        <end position="185"/>
    </location>
</feature>
<feature type="repeat" description="Annexin 3" evidence="7">
    <location>
        <begin position="197"/>
        <end position="269"/>
    </location>
</feature>
<feature type="repeat" description="Annexin 4" evidence="7">
    <location>
        <begin position="273"/>
        <end position="344"/>
    </location>
</feature>
<feature type="binding site" evidence="5">
    <location>
        <position position="59"/>
    </location>
    <ligand>
        <name>Ca(2+)</name>
        <dbReference type="ChEBI" id="CHEBI:29108"/>
        <label>1</label>
    </ligand>
</feature>
<feature type="binding site" evidence="5">
    <location>
        <position position="60"/>
    </location>
    <ligand>
        <name>Ca(2+)</name>
        <dbReference type="ChEBI" id="CHEBI:29108"/>
        <label>1</label>
    </ligand>
</feature>
<feature type="binding site" evidence="5">
    <location>
        <position position="62"/>
    </location>
    <ligand>
        <name>Ca(2+)</name>
        <dbReference type="ChEBI" id="CHEBI:29108"/>
        <label>1</label>
    </ligand>
</feature>
<feature type="binding site" evidence="5">
    <location>
        <position position="97"/>
    </location>
    <ligand>
        <name>Ca(2+)</name>
        <dbReference type="ChEBI" id="CHEBI:29108"/>
        <label>2</label>
    </ligand>
</feature>
<feature type="binding site" evidence="5">
    <location>
        <position position="100"/>
    </location>
    <ligand>
        <name>Ca(2+)</name>
        <dbReference type="ChEBI" id="CHEBI:29108"/>
        <label>2</label>
    </ligand>
</feature>
<feature type="binding site" evidence="5">
    <location>
        <position position="105"/>
    </location>
    <ligand>
        <name>Ca(2+)</name>
        <dbReference type="ChEBI" id="CHEBI:29108"/>
        <label>2</label>
    </ligand>
</feature>
<feature type="binding site" evidence="5">
    <location>
        <position position="127"/>
    </location>
    <ligand>
        <name>Ca(2+)</name>
        <dbReference type="ChEBI" id="CHEBI:29108"/>
        <label>3</label>
    </ligand>
</feature>
<feature type="binding site" evidence="5">
    <location>
        <position position="129"/>
    </location>
    <ligand>
        <name>Ca(2+)</name>
        <dbReference type="ChEBI" id="CHEBI:29108"/>
        <label>3</label>
    </ligand>
</feature>
<feature type="binding site" evidence="5">
    <location>
        <position position="131"/>
    </location>
    <ligand>
        <name>Ca(2+)</name>
        <dbReference type="ChEBI" id="CHEBI:29108"/>
        <label>3</label>
    </ligand>
</feature>
<feature type="binding site" evidence="5">
    <location>
        <position position="132"/>
    </location>
    <ligand>
        <name>Ca(2+)</name>
        <dbReference type="ChEBI" id="CHEBI:29108"/>
        <label>4</label>
    </ligand>
</feature>
<feature type="binding site" evidence="5">
    <location>
        <position position="134"/>
    </location>
    <ligand>
        <name>Ca(2+)</name>
        <dbReference type="ChEBI" id="CHEBI:29108"/>
        <label>4</label>
    </ligand>
</feature>
<feature type="binding site" evidence="5">
    <location>
        <position position="171"/>
    </location>
    <ligand>
        <name>Ca(2+)</name>
        <dbReference type="ChEBI" id="CHEBI:29108"/>
        <label>3</label>
    </ligand>
</feature>
<feature type="binding site" evidence="5">
    <location>
        <position position="210"/>
    </location>
    <ligand>
        <name>Ca(2+)</name>
        <dbReference type="ChEBI" id="CHEBI:29108"/>
        <label>5</label>
    </ligand>
</feature>
<feature type="binding site" evidence="5">
    <location>
        <position position="213"/>
    </location>
    <ligand>
        <name>Ca(2+)</name>
        <dbReference type="ChEBI" id="CHEBI:29108"/>
        <label>5</label>
    </ligand>
</feature>
<feature type="binding site" evidence="5">
    <location>
        <position position="215"/>
    </location>
    <ligand>
        <name>Ca(2+)</name>
        <dbReference type="ChEBI" id="CHEBI:29108"/>
        <label>5</label>
    </ligand>
</feature>
<feature type="binding site" evidence="5">
    <location>
        <position position="253"/>
    </location>
    <ligand>
        <name>Ca(2+)</name>
        <dbReference type="ChEBI" id="CHEBI:29108"/>
        <label>6</label>
    </ligand>
</feature>
<feature type="binding site" evidence="5">
    <location>
        <position position="255"/>
    </location>
    <ligand>
        <name>Ca(2+)</name>
        <dbReference type="ChEBI" id="CHEBI:29108"/>
        <label>5</label>
    </ligand>
</feature>
<feature type="binding site" evidence="5">
    <location>
        <position position="256"/>
    </location>
    <ligand>
        <name>Ca(2+)</name>
        <dbReference type="ChEBI" id="CHEBI:29108"/>
        <label>6</label>
    </ligand>
</feature>
<feature type="binding site" evidence="5">
    <location>
        <position position="261"/>
    </location>
    <ligand>
        <name>Ca(2+)</name>
        <dbReference type="ChEBI" id="CHEBI:29108"/>
        <label>6</label>
    </ligand>
</feature>
<feature type="binding site" evidence="5">
    <location>
        <position position="286"/>
    </location>
    <ligand>
        <name>Ca(2+)</name>
        <dbReference type="ChEBI" id="CHEBI:29108"/>
        <label>7</label>
    </ligand>
</feature>
<feature type="binding site" evidence="5">
    <location>
        <position position="288"/>
    </location>
    <ligand>
        <name>Ca(2+)</name>
        <dbReference type="ChEBI" id="CHEBI:29108"/>
        <label>7</label>
    </ligand>
</feature>
<feature type="binding site" evidence="5">
    <location>
        <position position="290"/>
    </location>
    <ligand>
        <name>Ca(2+)</name>
        <dbReference type="ChEBI" id="CHEBI:29108"/>
        <label>7</label>
    </ligand>
</feature>
<feature type="binding site" evidence="5">
    <location>
        <position position="328"/>
    </location>
    <ligand>
        <name>Ca(2+)</name>
        <dbReference type="ChEBI" id="CHEBI:29108"/>
        <label>8</label>
    </ligand>
</feature>
<feature type="binding site" evidence="5">
    <location>
        <position position="330"/>
    </location>
    <ligand>
        <name>Ca(2+)</name>
        <dbReference type="ChEBI" id="CHEBI:29108"/>
        <label>7</label>
    </ligand>
</feature>
<feature type="binding site" evidence="5">
    <location>
        <position position="331"/>
    </location>
    <ligand>
        <name>Ca(2+)</name>
        <dbReference type="ChEBI" id="CHEBI:29108"/>
        <label>8</label>
    </ligand>
</feature>
<feature type="binding site" evidence="5">
    <location>
        <position position="336"/>
    </location>
    <ligand>
        <name>Ca(2+)</name>
        <dbReference type="ChEBI" id="CHEBI:29108"/>
        <label>8</label>
    </ligand>
</feature>
<feature type="site" description="Cleavage; by CTSG" evidence="2">
    <location>
        <begin position="26"/>
        <end position="27"/>
    </location>
</feature>
<feature type="modified residue" description="Phosphoserine; by TRPM7" evidence="2">
    <location>
        <position position="5"/>
    </location>
</feature>
<feature type="modified residue" description="Phosphotyrosine; by EGFR" evidence="2">
    <location>
        <position position="21"/>
    </location>
</feature>
<feature type="modified residue" description="Phosphoserine; by PKC" evidence="2">
    <location>
        <position position="27"/>
    </location>
</feature>
<feature type="modified residue" description="Phosphoserine" evidence="2">
    <location>
        <position position="34"/>
    </location>
</feature>
<feature type="modified residue" description="Phosphoserine" evidence="2">
    <location>
        <position position="37"/>
    </location>
</feature>
<feature type="modified residue" description="N6-acetyllysine" evidence="4">
    <location>
        <position position="58"/>
    </location>
</feature>
<feature type="modified residue" description="Phosphothreonine" evidence="2">
    <location>
        <position position="136"/>
    </location>
</feature>
<feature type="modified residue" description="N6-acetyllysine" evidence="2">
    <location>
        <position position="239"/>
    </location>
</feature>
<feature type="modified residue" description="N6-acetyllysine" evidence="2">
    <location>
        <position position="312"/>
    </location>
</feature>
<feature type="disulfide bond" evidence="5">
    <location>
        <begin position="324"/>
        <end position="343"/>
    </location>
</feature>
<feature type="cross-link" description="Isoglutamyl lysine isopeptide (Gln-Lys) (interchain with K-?)" evidence="1">
    <location>
        <position position="19"/>
    </location>
</feature>
<feature type="cross-link" description="Glycyl lysine isopeptide (Lys-Gly) (interchain with G-Cter in SUMO1); alternate" evidence="2">
    <location>
        <position position="214"/>
    </location>
</feature>
<feature type="cross-link" description="Glycyl lysine isopeptide (Lys-Gly) (interchain with G-Cter in SUMO2); alternate" evidence="2">
    <location>
        <position position="214"/>
    </location>
</feature>
<feature type="cross-link" description="Glycyl lysine isopeptide (Lys-Gly) (interchain with G-Cter in SUMO1)" evidence="4">
    <location>
        <position position="257"/>
    </location>
</feature>
<feature type="cross-link" description="Glycyl lysine isopeptide (Lys-Gly) (interchain with G-Cter in SUMO1)" evidence="2">
    <location>
        <position position="332"/>
    </location>
</feature>
<sequence>MSMVSEFLKQAYFIDNQEQDYVKTVKSSKGGPGSAVSPYPSFDASSDVAALHKAITVKGVDEATIIDILTKRNNAQRQQIKAAYLQEKGKPLDEALKKALTGHLEEVVLALLKTPAQLDADELRAAMKGLGTDEDTLIEILVSRKNREIKEINRVYRDELKRDLAKDITSDTSGDFQKALLSLAKGDRCEDLSVNDDLADSDARALYEAGERRKGTDVNVFITILTTRSYSHLRRVFQKYTKYSQHDMNKALDLELKGDIENCLTAIVKCATSTPAFFAEKLHLAMKGAGTRHKALIRIMVSRSEIDMNDIKVYYQKMYGISLCQAILDETKGDYEKILVALCGGQ</sequence>
<comment type="function">
    <text evidence="2 4 5 8">Plays important roles in the innate immune response as effector of glucocorticoid-mediated responses and regulator of the inflammatory process. Has anti-inflammatory activity. Plays a role in glucocorticoid-mediated down-regulation of the early phase of the inflammatory response. Contributes to the adaptive immune response by enhancing signaling cascades that are triggered by T-cell activation, regulates differentiation and proliferation of activated T-cells. Promotes the differentiation of T-cells into Th1 cells and negatively regulates differentiation into Th2 cells (By similarity). Has no effect on unstimulated T-cells. Negatively regulates hormone exocytosis via activation of the formyl peptide receptors and reorganization of the actin cytoskeleton (By similarity). Has high affinity for Ca(2+) and can bind up to eight Ca(2+) ions (By similarity). Displays Ca(2+)-dependent binding to phospholipid membranes (PubMed:2962884). Plays a role in the formation of phagocytic cups and phagosomes. Plays a role in phagocytosis by mediating the Ca(2+)-dependent interaction between phagosomes and the actin cytoskeleton (By similarity).</text>
</comment>
<comment type="function">
    <molecule>Annexin Ac2-26</molecule>
    <text evidence="2">Functions at least in part by activating the formyl peptide receptors and downstream signaling cascades. Promotes chemotaxis of granulocytes and monocytes via activation of the formyl peptide receptors. Promotes rearrangement of the actin cytoskeleton, cell polarization and cell migration. Promotes resolution of inflammation and wound healing. Acts via neutrophil N-formyl peptide receptors to enhance the release of CXCL2.</text>
</comment>
<comment type="subunit">
    <text evidence="2 4 5">Homodimer; non-covalently linked (By similarity). Homodimer; linked by transglutamylation. Homodimers linked by transglutamylation are observed in placenta, but not in other tissues. Interacts with S100A11. Heterotetramer, formed by two molecules each of S100A11 and ANXA1 (By similarity). Interacts with DYSF (By similarity). Interacts with EGFR (By similarity).</text>
</comment>
<comment type="subcellular location">
    <subcellularLocation>
        <location evidence="3">Nucleus</location>
    </subcellularLocation>
    <subcellularLocation>
        <location evidence="4">Cytoplasm</location>
    </subcellularLocation>
    <subcellularLocation>
        <location evidence="4">Cell projection</location>
        <location evidence="4">Cilium</location>
    </subcellularLocation>
    <subcellularLocation>
        <location evidence="6">Basolateral cell membrane</location>
    </subcellularLocation>
    <subcellularLocation>
        <location evidence="4">Lateral cell membrane</location>
    </subcellularLocation>
    <subcellularLocation>
        <location evidence="4">Cell membrane</location>
        <topology evidence="4">Peripheral membrane protein</topology>
    </subcellularLocation>
    <subcellularLocation>
        <location evidence="4">Apical cell membrane</location>
    </subcellularLocation>
    <subcellularLocation>
        <location evidence="8">Membrane</location>
        <topology evidence="8">Peripheral membrane protein</topology>
    </subcellularLocation>
    <subcellularLocation>
        <location evidence="3">Endosome membrane</location>
        <topology evidence="3">Peripheral membrane protein</topology>
    </subcellularLocation>
    <subcellularLocation>
        <location evidence="4">Secreted</location>
    </subcellularLocation>
    <subcellularLocation>
        <location evidence="2">Secreted</location>
        <location evidence="2">Extracellular space</location>
    </subcellularLocation>
    <subcellularLocation>
        <location evidence="2">Cell membrane</location>
        <topology evidence="2">Peripheral membrane protein</topology>
        <orientation evidence="2">Extracellular side</orientation>
    </subcellularLocation>
    <subcellularLocation>
        <location evidence="5">Early endosome</location>
    </subcellularLocation>
    <subcellularLocation>
        <location evidence="5">Cytoplasmic vesicle membrane</location>
        <topology evidence="5">Peripheral membrane protein</topology>
    </subcellularLocation>
    <subcellularLocation>
        <location evidence="4">Secreted</location>
        <location evidence="4">Extracellular exosome</location>
    </subcellularLocation>
    <subcellularLocation>
        <location evidence="4">Cytoplasmic vesicle</location>
        <location evidence="4">Secretory vesicle lumen</location>
    </subcellularLocation>
    <subcellularLocation>
        <location evidence="4">Cell projection</location>
        <location evidence="4">Phagocytic cup</location>
    </subcellularLocation>
    <text evidence="2 4 8">Colocalizes with actin fibers at phagocytic cups. Secreted, at least in part via exosomes and other secretory vesicles. Detected in exosomes and other extracellular vesicles. Secretion is increased in response to wounding and inflammation (By similarity). Alternatively, the secretion is dependent on protein unfolding and facilitated by the cargo receptor TMED10; it results in the protein translocation from the cytoplasm into ERGIC (endoplasmic reticulum-Golgi intermediate compartment) followed by vesicle entry and secretion (By similarity). Detected in gelatinase granules in resting neutrophils. Neutrophil adhesion to endothelial cells stimulates secretion via gelatinase granules, but foreign particle phagocytosis has no effect. Displays calcium-dependent binding to phospholipid membranes (PubMed:2962884).</text>
</comment>
<comment type="domain">
    <text evidence="5">The full-length protein can bind eight Ca(2+) ions via the annexin repeats. Calcium binding causes a major conformation change that modifies dimer contacts and leads to surface exposure of the N-terminal phosphorylation sites; in the absence of Ca(2+), these sites are buried in the interior of the protein core. The N-terminal region becomes disordered in response to calcium-binding.</text>
</comment>
<comment type="PTM">
    <text evidence="2">Phosphorylated by protein kinase C, EGFR and TRPM7. Phosphorylated in response to EGF treatment.</text>
</comment>
<comment type="PTM">
    <text evidence="4">Sumoylated.</text>
</comment>
<comment type="PTM">
    <text evidence="2">Proteolytically cleaved by cathepsin CTSG to release the active N-terminal peptide Ac2-26.</text>
</comment>
<comment type="miscellaneous">
    <text evidence="4 8">Was originally identified as calcium and phospholipid binding protein that displays Ca(2+)-dependent binding to phospholipid membranes and can promote membrane aggregation in vitro. Was initially identified as inhibitor of phospholipase A2 activity (in vitro) (PubMed:2962884). Inhibition of phospholipase activity is mediated via its phospholipid binding activity that limits the access of phospholipase to its substrates.</text>
</comment>
<comment type="similarity">
    <text evidence="7 9">Belongs to the annexin family.</text>
</comment>
<proteinExistence type="evidence at protein level"/>
<keyword id="KW-0007">Acetylation</keyword>
<keyword id="KW-1064">Adaptive immunity</keyword>
<keyword id="KW-0041">Annexin</keyword>
<keyword id="KW-0106">Calcium</keyword>
<keyword id="KW-0111">Calcium/phospholipid-binding</keyword>
<keyword id="KW-1003">Cell membrane</keyword>
<keyword id="KW-0966">Cell projection</keyword>
<keyword id="KW-0969">Cilium</keyword>
<keyword id="KW-0963">Cytoplasm</keyword>
<keyword id="KW-0968">Cytoplasmic vesicle</keyword>
<keyword id="KW-0903">Direct protein sequencing</keyword>
<keyword id="KW-1015">Disulfide bond</keyword>
<keyword id="KW-0967">Endosome</keyword>
<keyword id="KW-0391">Immunity</keyword>
<keyword id="KW-0395">Inflammatory response</keyword>
<keyword id="KW-0399">Innate immunity</keyword>
<keyword id="KW-1017">Isopeptide bond</keyword>
<keyword id="KW-0472">Membrane</keyword>
<keyword id="KW-0479">Metal-binding</keyword>
<keyword id="KW-0539">Nucleus</keyword>
<keyword id="KW-0593">Phospholipase A2 inhibitor</keyword>
<keyword id="KW-0597">Phosphoprotein</keyword>
<keyword id="KW-0677">Repeat</keyword>
<keyword id="KW-0964">Secreted</keyword>
<keyword id="KW-0832">Ubl conjugation</keyword>
<name>ANXA1_CAVCU</name>
<dbReference type="EMBL" id="X14635">
    <property type="protein sequence ID" value="CAA32783.1"/>
    <property type="molecule type" value="mRNA"/>
</dbReference>
<dbReference type="SMR" id="P14087"/>
<dbReference type="GO" id="GO:0016324">
    <property type="term" value="C:apical plasma membrane"/>
    <property type="evidence" value="ECO:0000250"/>
    <property type="project" value="UniProtKB"/>
</dbReference>
<dbReference type="GO" id="GO:0016323">
    <property type="term" value="C:basolateral plasma membrane"/>
    <property type="evidence" value="ECO:0007669"/>
    <property type="project" value="UniProtKB-SubCell"/>
</dbReference>
<dbReference type="GO" id="GO:0005737">
    <property type="term" value="C:cytoplasm"/>
    <property type="evidence" value="ECO:0000250"/>
    <property type="project" value="UniProtKB"/>
</dbReference>
<dbReference type="GO" id="GO:0031901">
    <property type="term" value="C:early endosome membrane"/>
    <property type="evidence" value="ECO:0000250"/>
    <property type="project" value="UniProtKB"/>
</dbReference>
<dbReference type="GO" id="GO:0070062">
    <property type="term" value="C:extracellular exosome"/>
    <property type="evidence" value="ECO:0000250"/>
    <property type="project" value="UniProtKB"/>
</dbReference>
<dbReference type="GO" id="GO:0005615">
    <property type="term" value="C:extracellular space"/>
    <property type="evidence" value="ECO:0000250"/>
    <property type="project" value="UniProtKB"/>
</dbReference>
<dbReference type="GO" id="GO:0016328">
    <property type="term" value="C:lateral plasma membrane"/>
    <property type="evidence" value="ECO:0000250"/>
    <property type="project" value="UniProtKB"/>
</dbReference>
<dbReference type="GO" id="GO:0031514">
    <property type="term" value="C:motile cilium"/>
    <property type="evidence" value="ECO:0000250"/>
    <property type="project" value="UniProtKB"/>
</dbReference>
<dbReference type="GO" id="GO:0005634">
    <property type="term" value="C:nucleus"/>
    <property type="evidence" value="ECO:0000250"/>
    <property type="project" value="UniProtKB"/>
</dbReference>
<dbReference type="GO" id="GO:0001891">
    <property type="term" value="C:phagocytic cup"/>
    <property type="evidence" value="ECO:0007669"/>
    <property type="project" value="UniProtKB-SubCell"/>
</dbReference>
<dbReference type="GO" id="GO:0005886">
    <property type="term" value="C:plasma membrane"/>
    <property type="evidence" value="ECO:0000250"/>
    <property type="project" value="UniProtKB"/>
</dbReference>
<dbReference type="GO" id="GO:0005509">
    <property type="term" value="F:calcium ion binding"/>
    <property type="evidence" value="ECO:0000250"/>
    <property type="project" value="UniProtKB"/>
</dbReference>
<dbReference type="GO" id="GO:0005544">
    <property type="term" value="F:calcium-dependent phospholipid binding"/>
    <property type="evidence" value="ECO:0000250"/>
    <property type="project" value="UniProtKB"/>
</dbReference>
<dbReference type="GO" id="GO:0001786">
    <property type="term" value="F:phosphatidylserine binding"/>
    <property type="evidence" value="ECO:0007669"/>
    <property type="project" value="TreeGrafter"/>
</dbReference>
<dbReference type="GO" id="GO:0019834">
    <property type="term" value="F:phospholipase A2 inhibitor activity"/>
    <property type="evidence" value="ECO:0007669"/>
    <property type="project" value="UniProtKB-KW"/>
</dbReference>
<dbReference type="GO" id="GO:0030036">
    <property type="term" value="P:actin cytoskeleton organization"/>
    <property type="evidence" value="ECO:0000250"/>
    <property type="project" value="UniProtKB"/>
</dbReference>
<dbReference type="GO" id="GO:0002250">
    <property type="term" value="P:adaptive immune response"/>
    <property type="evidence" value="ECO:0007669"/>
    <property type="project" value="UniProtKB-KW"/>
</dbReference>
<dbReference type="GO" id="GO:0071385">
    <property type="term" value="P:cellular response to glucocorticoid stimulus"/>
    <property type="evidence" value="ECO:0000250"/>
    <property type="project" value="UniProtKB"/>
</dbReference>
<dbReference type="GO" id="GO:0007187">
    <property type="term" value="P:G protein-coupled receptor signaling pathway, coupled to cyclic nucleotide second messenger"/>
    <property type="evidence" value="ECO:0000250"/>
    <property type="project" value="UniProtKB"/>
</dbReference>
<dbReference type="GO" id="GO:0071621">
    <property type="term" value="P:granulocyte chemotaxis"/>
    <property type="evidence" value="ECO:0000250"/>
    <property type="project" value="UniProtKB"/>
</dbReference>
<dbReference type="GO" id="GO:0006954">
    <property type="term" value="P:inflammatory response"/>
    <property type="evidence" value="ECO:0000250"/>
    <property type="project" value="UniProtKB"/>
</dbReference>
<dbReference type="GO" id="GO:0045087">
    <property type="term" value="P:innate immune response"/>
    <property type="evidence" value="ECO:0007669"/>
    <property type="project" value="UniProtKB-KW"/>
</dbReference>
<dbReference type="GO" id="GO:0002548">
    <property type="term" value="P:monocyte chemotaxis"/>
    <property type="evidence" value="ECO:0000250"/>
    <property type="project" value="UniProtKB"/>
</dbReference>
<dbReference type="GO" id="GO:0045920">
    <property type="term" value="P:negative regulation of exocytosis"/>
    <property type="evidence" value="ECO:0000250"/>
    <property type="project" value="UniProtKB"/>
</dbReference>
<dbReference type="GO" id="GO:0045629">
    <property type="term" value="P:negative regulation of T-helper 2 cell differentiation"/>
    <property type="evidence" value="ECO:0000250"/>
    <property type="project" value="UniProtKB"/>
</dbReference>
<dbReference type="GO" id="GO:0042119">
    <property type="term" value="P:neutrophil activation"/>
    <property type="evidence" value="ECO:0000250"/>
    <property type="project" value="UniProtKB"/>
</dbReference>
<dbReference type="GO" id="GO:0006909">
    <property type="term" value="P:phagocytosis"/>
    <property type="evidence" value="ECO:0000250"/>
    <property type="project" value="UniProtKB"/>
</dbReference>
<dbReference type="GO" id="GO:0032743">
    <property type="term" value="P:positive regulation of interleukin-2 production"/>
    <property type="evidence" value="ECO:0000250"/>
    <property type="project" value="UniProtKB"/>
</dbReference>
<dbReference type="GO" id="GO:0042102">
    <property type="term" value="P:positive regulation of T cell proliferation"/>
    <property type="evidence" value="ECO:0000250"/>
    <property type="project" value="UniProtKB"/>
</dbReference>
<dbReference type="GO" id="GO:0045627">
    <property type="term" value="P:positive regulation of T-helper 1 cell differentiation"/>
    <property type="evidence" value="ECO:0000250"/>
    <property type="project" value="UniProtKB"/>
</dbReference>
<dbReference type="GO" id="GO:0090303">
    <property type="term" value="P:positive regulation of wound healing"/>
    <property type="evidence" value="ECO:0000250"/>
    <property type="project" value="UniProtKB"/>
</dbReference>
<dbReference type="GO" id="GO:0008360">
    <property type="term" value="P:regulation of cell shape"/>
    <property type="evidence" value="ECO:0000250"/>
    <property type="project" value="UniProtKB"/>
</dbReference>
<dbReference type="GO" id="GO:0046883">
    <property type="term" value="P:regulation of hormone secretion"/>
    <property type="evidence" value="ECO:0000250"/>
    <property type="project" value="UniProtKB"/>
</dbReference>
<dbReference type="GO" id="GO:0050727">
    <property type="term" value="P:regulation of inflammatory response"/>
    <property type="evidence" value="ECO:0000250"/>
    <property type="project" value="UniProtKB"/>
</dbReference>
<dbReference type="GO" id="GO:0032652">
    <property type="term" value="P:regulation of interleukin-1 production"/>
    <property type="evidence" value="ECO:0000250"/>
    <property type="project" value="UniProtKB"/>
</dbReference>
<dbReference type="GO" id="GO:0002685">
    <property type="term" value="P:regulation of leukocyte migration"/>
    <property type="evidence" value="ECO:0000250"/>
    <property type="project" value="UniProtKB"/>
</dbReference>
<dbReference type="FunFam" id="1.10.220.10:FF:000001">
    <property type="entry name" value="Annexin"/>
    <property type="match status" value="1"/>
</dbReference>
<dbReference type="FunFam" id="1.10.220.10:FF:000002">
    <property type="entry name" value="Annexin"/>
    <property type="match status" value="1"/>
</dbReference>
<dbReference type="FunFam" id="1.10.220.10:FF:000003">
    <property type="entry name" value="Annexin"/>
    <property type="match status" value="1"/>
</dbReference>
<dbReference type="FunFam" id="1.10.220.10:FF:000007">
    <property type="entry name" value="Annexin"/>
    <property type="match status" value="1"/>
</dbReference>
<dbReference type="Gene3D" id="1.10.220.10">
    <property type="entry name" value="Annexin"/>
    <property type="match status" value="4"/>
</dbReference>
<dbReference type="InterPro" id="IPR001464">
    <property type="entry name" value="Annexin"/>
</dbReference>
<dbReference type="InterPro" id="IPR018502">
    <property type="entry name" value="Annexin_repeat"/>
</dbReference>
<dbReference type="InterPro" id="IPR018252">
    <property type="entry name" value="Annexin_repeat_CS"/>
</dbReference>
<dbReference type="InterPro" id="IPR037104">
    <property type="entry name" value="Annexin_sf"/>
</dbReference>
<dbReference type="InterPro" id="IPR002388">
    <property type="entry name" value="ANX1"/>
</dbReference>
<dbReference type="PANTHER" id="PTHR10502">
    <property type="entry name" value="ANNEXIN"/>
    <property type="match status" value="1"/>
</dbReference>
<dbReference type="PANTHER" id="PTHR10502:SF17">
    <property type="entry name" value="ANNEXIN A1"/>
    <property type="match status" value="1"/>
</dbReference>
<dbReference type="Pfam" id="PF00191">
    <property type="entry name" value="Annexin"/>
    <property type="match status" value="4"/>
</dbReference>
<dbReference type="PRINTS" id="PR00196">
    <property type="entry name" value="ANNEXIN"/>
</dbReference>
<dbReference type="PRINTS" id="PR00197">
    <property type="entry name" value="ANNEXINI"/>
</dbReference>
<dbReference type="SMART" id="SM00335">
    <property type="entry name" value="ANX"/>
    <property type="match status" value="4"/>
</dbReference>
<dbReference type="SUPFAM" id="SSF47874">
    <property type="entry name" value="Annexin"/>
    <property type="match status" value="1"/>
</dbReference>
<dbReference type="PROSITE" id="PS00223">
    <property type="entry name" value="ANNEXIN_1"/>
    <property type="match status" value="4"/>
</dbReference>
<dbReference type="PROSITE" id="PS51897">
    <property type="entry name" value="ANNEXIN_2"/>
    <property type="match status" value="4"/>
</dbReference>
<protein>
    <recommendedName>
        <fullName>Annexin A1</fullName>
    </recommendedName>
    <alternativeName>
        <fullName>Annexin I</fullName>
    </alternativeName>
    <alternativeName>
        <fullName>Annexin-1</fullName>
    </alternativeName>
    <alternativeName>
        <fullName>Calpactin II</fullName>
    </alternativeName>
    <alternativeName>
        <fullName>Calpactin-2</fullName>
    </alternativeName>
    <alternativeName>
        <fullName>Chromobindin-9</fullName>
    </alternativeName>
    <alternativeName>
        <fullName>Lipocortin I</fullName>
    </alternativeName>
    <alternativeName>
        <fullName>Lipocortin-like 33 kDa protein</fullName>
    </alternativeName>
    <alternativeName>
        <fullName>Phospholipase A2 inhibitory protein</fullName>
    </alternativeName>
    <alternativeName>
        <fullName>p35</fullName>
    </alternativeName>
    <component>
        <recommendedName>
            <fullName evidence="2">Annexin Ac2-26</fullName>
        </recommendedName>
    </component>
</protein>
<reference key="1">
    <citation type="journal article" date="1989" name="FEBS Lett.">
        <title>cDNA cloning and nucleotide sequence of lipocortin-like 33 kDa protein in guinea pig neutrophils.</title>
        <authorList>
            <person name="Sato E.F."/>
            <person name="Tanaka Y."/>
            <person name="Utsumi K."/>
        </authorList>
    </citation>
    <scope>NUCLEOTIDE SEQUENCE [MRNA]</scope>
    <source>
        <tissue>Neutrophil</tissue>
    </source>
</reference>
<reference key="2">
    <citation type="journal article" date="1988" name="FEBS Lett.">
        <title>Purification and characterization of a lipocortin-like 33 kDa protein from guinea pig neutrophils.</title>
        <authorList>
            <person name="Sato E.F."/>
            <person name="Miyahara M."/>
            <person name="Utsumi K."/>
        </authorList>
    </citation>
    <scope>PARTIAL PROTEIN SEQUENCE</scope>
    <scope>FUNCTION</scope>
    <scope>SUBCELLULAR LOCATION</scope>
    <scope>SUBUNIT</scope>
    <source>
        <tissue>Neutrophil</tissue>
    </source>
</reference>
<gene>
    <name type="primary">ANXA1</name>
    <name type="synonym">ANX1</name>
</gene>
<organism>
    <name type="scientific">Cavia cutleri</name>
    <name type="common">Guinea pig</name>
    <dbReference type="NCBI Taxonomy" id="10144"/>
    <lineage>
        <taxon>Eukaryota</taxon>
        <taxon>Metazoa</taxon>
        <taxon>Chordata</taxon>
        <taxon>Craniata</taxon>
        <taxon>Vertebrata</taxon>
        <taxon>Euteleostomi</taxon>
        <taxon>Mammalia</taxon>
        <taxon>Eutheria</taxon>
        <taxon>Euarchontoglires</taxon>
        <taxon>Glires</taxon>
        <taxon>Rodentia</taxon>
        <taxon>Hystricomorpha</taxon>
        <taxon>Caviidae</taxon>
        <taxon>Cavia</taxon>
    </lineage>
</organism>
<evidence type="ECO:0000250" key="1"/>
<evidence type="ECO:0000250" key="2">
    <source>
        <dbReference type="UniProtKB" id="P04083"/>
    </source>
</evidence>
<evidence type="ECO:0000250" key="3">
    <source>
        <dbReference type="UniProtKB" id="P07150"/>
    </source>
</evidence>
<evidence type="ECO:0000250" key="4">
    <source>
        <dbReference type="UniProtKB" id="P10107"/>
    </source>
</evidence>
<evidence type="ECO:0000250" key="5">
    <source>
        <dbReference type="UniProtKB" id="P19619"/>
    </source>
</evidence>
<evidence type="ECO:0000250" key="6">
    <source>
        <dbReference type="UniProtKB" id="P51662"/>
    </source>
</evidence>
<evidence type="ECO:0000255" key="7">
    <source>
        <dbReference type="PROSITE-ProRule" id="PRU01245"/>
    </source>
</evidence>
<evidence type="ECO:0000269" key="8">
    <source>
    </source>
</evidence>
<evidence type="ECO:0000305" key="9"/>